<protein>
    <recommendedName>
        <fullName evidence="1">Large ribosomal subunit protein uL2</fullName>
    </recommendedName>
    <alternativeName>
        <fullName evidence="3">50S ribosomal protein L2</fullName>
    </alternativeName>
</protein>
<accession>A5IM86</accession>
<name>RL2_THEP1</name>
<reference key="1">
    <citation type="submission" date="2007-05" db="EMBL/GenBank/DDBJ databases">
        <title>Complete sequence of Thermotoga petrophila RKU-1.</title>
        <authorList>
            <consortium name="US DOE Joint Genome Institute"/>
            <person name="Copeland A."/>
            <person name="Lucas S."/>
            <person name="Lapidus A."/>
            <person name="Barry K."/>
            <person name="Glavina del Rio T."/>
            <person name="Dalin E."/>
            <person name="Tice H."/>
            <person name="Pitluck S."/>
            <person name="Sims D."/>
            <person name="Brettin T."/>
            <person name="Bruce D."/>
            <person name="Detter J.C."/>
            <person name="Han C."/>
            <person name="Tapia R."/>
            <person name="Schmutz J."/>
            <person name="Larimer F."/>
            <person name="Land M."/>
            <person name="Hauser L."/>
            <person name="Kyrpides N."/>
            <person name="Mikhailova N."/>
            <person name="Nelson K."/>
            <person name="Gogarten J.P."/>
            <person name="Noll K."/>
            <person name="Richardson P."/>
        </authorList>
    </citation>
    <scope>NUCLEOTIDE SEQUENCE [LARGE SCALE GENOMIC DNA]</scope>
    <source>
        <strain>ATCC BAA-488 / DSM 13995 / JCM 10881 / RKU-1</strain>
    </source>
</reference>
<evidence type="ECO:0000255" key="1">
    <source>
        <dbReference type="HAMAP-Rule" id="MF_01320"/>
    </source>
</evidence>
<evidence type="ECO:0000256" key="2">
    <source>
        <dbReference type="SAM" id="MobiDB-lite"/>
    </source>
</evidence>
<evidence type="ECO:0000305" key="3"/>
<feature type="chain" id="PRO_1000051957" description="Large ribosomal subunit protein uL2">
    <location>
        <begin position="1"/>
        <end position="276"/>
    </location>
</feature>
<feature type="region of interest" description="Disordered" evidence="2">
    <location>
        <begin position="223"/>
        <end position="276"/>
    </location>
</feature>
<feature type="compositionally biased region" description="Basic and acidic residues" evidence="2">
    <location>
        <begin position="230"/>
        <end position="240"/>
    </location>
</feature>
<feature type="compositionally biased region" description="Basic and acidic residues" evidence="2">
    <location>
        <begin position="263"/>
        <end position="276"/>
    </location>
</feature>
<comment type="function">
    <text evidence="1">One of the primary rRNA binding proteins. Required for association of the 30S and 50S subunits to form the 70S ribosome, for tRNA binding and peptide bond formation. It has been suggested to have peptidyltransferase activity; this is somewhat controversial. Makes several contacts with the 16S rRNA in the 70S ribosome.</text>
</comment>
<comment type="subunit">
    <text evidence="1">Part of the 50S ribosomal subunit. Forms a bridge to the 30S subunit in the 70S ribosome.</text>
</comment>
<comment type="similarity">
    <text evidence="1">Belongs to the universal ribosomal protein uL2 family.</text>
</comment>
<gene>
    <name evidence="1" type="primary">rplB</name>
    <name type="ordered locus">Tpet_1295</name>
</gene>
<dbReference type="EMBL" id="CP000702">
    <property type="protein sequence ID" value="ABQ47309.1"/>
    <property type="molecule type" value="Genomic_DNA"/>
</dbReference>
<dbReference type="RefSeq" id="WP_008194995.1">
    <property type="nucleotide sequence ID" value="NC_009486.1"/>
</dbReference>
<dbReference type="SMR" id="A5IM86"/>
<dbReference type="STRING" id="390874.Tpet_1295"/>
<dbReference type="KEGG" id="tpt:Tpet_1295"/>
<dbReference type="eggNOG" id="COG0090">
    <property type="taxonomic scope" value="Bacteria"/>
</dbReference>
<dbReference type="HOGENOM" id="CLU_036235_2_1_0"/>
<dbReference type="Proteomes" id="UP000006558">
    <property type="component" value="Chromosome"/>
</dbReference>
<dbReference type="GO" id="GO:0015934">
    <property type="term" value="C:large ribosomal subunit"/>
    <property type="evidence" value="ECO:0007669"/>
    <property type="project" value="InterPro"/>
</dbReference>
<dbReference type="GO" id="GO:0019843">
    <property type="term" value="F:rRNA binding"/>
    <property type="evidence" value="ECO:0007669"/>
    <property type="project" value="UniProtKB-UniRule"/>
</dbReference>
<dbReference type="GO" id="GO:0003735">
    <property type="term" value="F:structural constituent of ribosome"/>
    <property type="evidence" value="ECO:0007669"/>
    <property type="project" value="InterPro"/>
</dbReference>
<dbReference type="GO" id="GO:0016740">
    <property type="term" value="F:transferase activity"/>
    <property type="evidence" value="ECO:0007669"/>
    <property type="project" value="InterPro"/>
</dbReference>
<dbReference type="GO" id="GO:0002181">
    <property type="term" value="P:cytoplasmic translation"/>
    <property type="evidence" value="ECO:0007669"/>
    <property type="project" value="TreeGrafter"/>
</dbReference>
<dbReference type="FunFam" id="2.30.30.30:FF:000001">
    <property type="entry name" value="50S ribosomal protein L2"/>
    <property type="match status" value="1"/>
</dbReference>
<dbReference type="FunFam" id="2.40.50.140:FF:000003">
    <property type="entry name" value="50S ribosomal protein L2"/>
    <property type="match status" value="1"/>
</dbReference>
<dbReference type="FunFam" id="4.10.950.10:FF:000001">
    <property type="entry name" value="50S ribosomal protein L2"/>
    <property type="match status" value="1"/>
</dbReference>
<dbReference type="Gene3D" id="2.30.30.30">
    <property type="match status" value="1"/>
</dbReference>
<dbReference type="Gene3D" id="2.40.50.140">
    <property type="entry name" value="Nucleic acid-binding proteins"/>
    <property type="match status" value="1"/>
</dbReference>
<dbReference type="Gene3D" id="4.10.950.10">
    <property type="entry name" value="Ribosomal protein L2, domain 3"/>
    <property type="match status" value="1"/>
</dbReference>
<dbReference type="HAMAP" id="MF_01320_B">
    <property type="entry name" value="Ribosomal_uL2_B"/>
    <property type="match status" value="1"/>
</dbReference>
<dbReference type="InterPro" id="IPR012340">
    <property type="entry name" value="NA-bd_OB-fold"/>
</dbReference>
<dbReference type="InterPro" id="IPR014722">
    <property type="entry name" value="Rib_uL2_dom2"/>
</dbReference>
<dbReference type="InterPro" id="IPR002171">
    <property type="entry name" value="Ribosomal_uL2"/>
</dbReference>
<dbReference type="InterPro" id="IPR005880">
    <property type="entry name" value="Ribosomal_uL2_bac/org-type"/>
</dbReference>
<dbReference type="InterPro" id="IPR022669">
    <property type="entry name" value="Ribosomal_uL2_C"/>
</dbReference>
<dbReference type="InterPro" id="IPR022671">
    <property type="entry name" value="Ribosomal_uL2_CS"/>
</dbReference>
<dbReference type="InterPro" id="IPR014726">
    <property type="entry name" value="Ribosomal_uL2_dom3"/>
</dbReference>
<dbReference type="InterPro" id="IPR022666">
    <property type="entry name" value="Ribosomal_uL2_RNA-bd_dom"/>
</dbReference>
<dbReference type="InterPro" id="IPR008991">
    <property type="entry name" value="Translation_prot_SH3-like_sf"/>
</dbReference>
<dbReference type="NCBIfam" id="TIGR01171">
    <property type="entry name" value="rplB_bact"/>
    <property type="match status" value="1"/>
</dbReference>
<dbReference type="PANTHER" id="PTHR13691:SF5">
    <property type="entry name" value="LARGE RIBOSOMAL SUBUNIT PROTEIN UL2M"/>
    <property type="match status" value="1"/>
</dbReference>
<dbReference type="PANTHER" id="PTHR13691">
    <property type="entry name" value="RIBOSOMAL PROTEIN L2"/>
    <property type="match status" value="1"/>
</dbReference>
<dbReference type="Pfam" id="PF00181">
    <property type="entry name" value="Ribosomal_L2"/>
    <property type="match status" value="1"/>
</dbReference>
<dbReference type="Pfam" id="PF03947">
    <property type="entry name" value="Ribosomal_L2_C"/>
    <property type="match status" value="1"/>
</dbReference>
<dbReference type="PIRSF" id="PIRSF002158">
    <property type="entry name" value="Ribosomal_L2"/>
    <property type="match status" value="1"/>
</dbReference>
<dbReference type="SMART" id="SM01383">
    <property type="entry name" value="Ribosomal_L2"/>
    <property type="match status" value="1"/>
</dbReference>
<dbReference type="SMART" id="SM01382">
    <property type="entry name" value="Ribosomal_L2_C"/>
    <property type="match status" value="1"/>
</dbReference>
<dbReference type="SUPFAM" id="SSF50249">
    <property type="entry name" value="Nucleic acid-binding proteins"/>
    <property type="match status" value="1"/>
</dbReference>
<dbReference type="SUPFAM" id="SSF50104">
    <property type="entry name" value="Translation proteins SH3-like domain"/>
    <property type="match status" value="1"/>
</dbReference>
<dbReference type="PROSITE" id="PS00467">
    <property type="entry name" value="RIBOSOMAL_L2"/>
    <property type="match status" value="1"/>
</dbReference>
<proteinExistence type="inferred from homology"/>
<organism>
    <name type="scientific">Thermotoga petrophila (strain ATCC BAA-488 / DSM 13995 / JCM 10881 / RKU-1)</name>
    <dbReference type="NCBI Taxonomy" id="390874"/>
    <lineage>
        <taxon>Bacteria</taxon>
        <taxon>Thermotogati</taxon>
        <taxon>Thermotogota</taxon>
        <taxon>Thermotogae</taxon>
        <taxon>Thermotogales</taxon>
        <taxon>Thermotogaceae</taxon>
        <taxon>Thermotoga</taxon>
    </lineage>
</organism>
<keyword id="KW-0687">Ribonucleoprotein</keyword>
<keyword id="KW-0689">Ribosomal protein</keyword>
<keyword id="KW-0694">RNA-binding</keyword>
<keyword id="KW-0699">rRNA-binding</keyword>
<sequence length="276" mass="30583">MGLKRFKPVTPGRRFMVISDFSDITKTEPEKSLLAPLKKTGGRNHHGRVTVRHRGGGHKRRYRIIDFKRYDKAGIPAKVLAIEYDPNRSARIALLLYADGEKRYILAPKGVNVGDTLMSGPDAEIRPGNALPLEKIPVGTLVHNVEFTPGKGGQIARAAGTYCQIMAKEGNYALLRMPSGELRKVHIKCYATVGVVGNEDHKNEVHGKAGRVRWLGRRPHVRGVAMNPVDHPHGGGEGRGKGHHPTSPWGLPTKGYKTRRGKRPSDKFIVRRRNEA</sequence>